<protein>
    <recommendedName>
        <fullName evidence="1">Ribosomal RNA small subunit methyltransferase F</fullName>
        <ecNumber evidence="1">2.1.1.178</ecNumber>
    </recommendedName>
    <alternativeName>
        <fullName evidence="1">16S rRNA m5C1407 methyltransferase</fullName>
    </alternativeName>
    <alternativeName>
        <fullName evidence="1">rRNA (cytosine-C(5)-)-methyltransferase RsmF</fullName>
    </alternativeName>
</protein>
<evidence type="ECO:0000255" key="1">
    <source>
        <dbReference type="HAMAP-Rule" id="MF_01579"/>
    </source>
</evidence>
<reference key="1">
    <citation type="submission" date="2007-10" db="EMBL/GenBank/DDBJ databases">
        <title>Complete sequence of Shewanella pealeana ATCC 700345.</title>
        <authorList>
            <consortium name="US DOE Joint Genome Institute"/>
            <person name="Copeland A."/>
            <person name="Lucas S."/>
            <person name="Lapidus A."/>
            <person name="Barry K."/>
            <person name="Glavina del Rio T."/>
            <person name="Dalin E."/>
            <person name="Tice H."/>
            <person name="Pitluck S."/>
            <person name="Chertkov O."/>
            <person name="Brettin T."/>
            <person name="Bruce D."/>
            <person name="Detter J.C."/>
            <person name="Han C."/>
            <person name="Schmutz J."/>
            <person name="Larimer F."/>
            <person name="Land M."/>
            <person name="Hauser L."/>
            <person name="Kyrpides N."/>
            <person name="Kim E."/>
            <person name="Zhao J.-S.Z."/>
            <person name="Manno D."/>
            <person name="Hawari J."/>
            <person name="Richardson P."/>
        </authorList>
    </citation>
    <scope>NUCLEOTIDE SEQUENCE [LARGE SCALE GENOMIC DNA]</scope>
    <source>
        <strain>ATCC 700345 / ANG-SQ1</strain>
    </source>
</reference>
<sequence>MAHFNQNFLDSIERDLPSHLSMEDFIAYSNKPLRLSIRVNTLKISHDNFIDLMTPKGWHFEPIPWCKDGFWVTLTQEIQLGNTIEHLQGLFYIQEASSMLPPTALFEPLEVAVAAENTEDDGSDDFSNKIVLDMASAPGSKTTQIAALMKNQGLLIANEYSASRVKVLHANVARMGVANCALTHFDARVFGEYMFETFDSILLDAPCSGEGTIRKDPDALKNWDNNDDKGIVETQKALIESAFLALKVGGSLVYSTCALSRQENQDVCHHLKSLYGDAVEFGSLATLFPQADKACTEEGFLHVWPQIYDSEGFFVAKIYKTSAVERQLPEPRKQKNFPFTLAKPKQVEELAQYFRDSFSISLPDNAQVMVRDLEFWLFPSPVIPLIGKMRYQRIGIKLADALKKGYKVRHEAVLALSSPTRFELSDEQAKEFLMGRDISLLEKGKPQGEVIVSYASNPLGVAKHLGNKLKNNLPRDLVKDKIALYSHN</sequence>
<feature type="chain" id="PRO_1000087932" description="Ribosomal RNA small subunit methyltransferase F">
    <location>
        <begin position="1"/>
        <end position="488"/>
    </location>
</feature>
<feature type="active site" description="Nucleophile" evidence="1">
    <location>
        <position position="257"/>
    </location>
</feature>
<feature type="binding site" evidence="1">
    <location>
        <begin position="135"/>
        <end position="141"/>
    </location>
    <ligand>
        <name>S-adenosyl-L-methionine</name>
        <dbReference type="ChEBI" id="CHEBI:59789"/>
    </ligand>
</feature>
<feature type="binding site" evidence="1">
    <location>
        <position position="159"/>
    </location>
    <ligand>
        <name>S-adenosyl-L-methionine</name>
        <dbReference type="ChEBI" id="CHEBI:59789"/>
    </ligand>
</feature>
<feature type="binding site" evidence="1">
    <location>
        <position position="186"/>
    </location>
    <ligand>
        <name>S-adenosyl-L-methionine</name>
        <dbReference type="ChEBI" id="CHEBI:59789"/>
    </ligand>
</feature>
<feature type="binding site" evidence="1">
    <location>
        <position position="204"/>
    </location>
    <ligand>
        <name>S-adenosyl-L-methionine</name>
        <dbReference type="ChEBI" id="CHEBI:59789"/>
    </ligand>
</feature>
<keyword id="KW-0963">Cytoplasm</keyword>
<keyword id="KW-0489">Methyltransferase</keyword>
<keyword id="KW-1185">Reference proteome</keyword>
<keyword id="KW-0694">RNA-binding</keyword>
<keyword id="KW-0698">rRNA processing</keyword>
<keyword id="KW-0949">S-adenosyl-L-methionine</keyword>
<keyword id="KW-0808">Transferase</keyword>
<organism>
    <name type="scientific">Shewanella pealeana (strain ATCC 700345 / ANG-SQ1)</name>
    <dbReference type="NCBI Taxonomy" id="398579"/>
    <lineage>
        <taxon>Bacteria</taxon>
        <taxon>Pseudomonadati</taxon>
        <taxon>Pseudomonadota</taxon>
        <taxon>Gammaproteobacteria</taxon>
        <taxon>Alteromonadales</taxon>
        <taxon>Shewanellaceae</taxon>
        <taxon>Shewanella</taxon>
    </lineage>
</organism>
<proteinExistence type="inferred from homology"/>
<gene>
    <name evidence="1" type="primary">rsmF</name>
    <name type="ordered locus">Spea_1927</name>
</gene>
<accession>A8H3W2</accession>
<comment type="function">
    <text evidence="1">Specifically methylates the cytosine at position 1407 (m5C1407) of 16S rRNA.</text>
</comment>
<comment type="catalytic activity">
    <reaction evidence="1">
        <text>cytidine(1407) in 16S rRNA + S-adenosyl-L-methionine = 5-methylcytidine(1407) in 16S rRNA + S-adenosyl-L-homocysteine + H(+)</text>
        <dbReference type="Rhea" id="RHEA:42756"/>
        <dbReference type="Rhea" id="RHEA-COMP:10223"/>
        <dbReference type="Rhea" id="RHEA-COMP:10224"/>
        <dbReference type="ChEBI" id="CHEBI:15378"/>
        <dbReference type="ChEBI" id="CHEBI:57856"/>
        <dbReference type="ChEBI" id="CHEBI:59789"/>
        <dbReference type="ChEBI" id="CHEBI:74483"/>
        <dbReference type="ChEBI" id="CHEBI:82748"/>
        <dbReference type="EC" id="2.1.1.178"/>
    </reaction>
</comment>
<comment type="subcellular location">
    <subcellularLocation>
        <location evidence="1">Cytoplasm</location>
    </subcellularLocation>
</comment>
<comment type="similarity">
    <text evidence="1">Belongs to the class I-like SAM-binding methyltransferase superfamily. RsmB/NOP family.</text>
</comment>
<name>RSMF_SHEPA</name>
<dbReference type="EC" id="2.1.1.178" evidence="1"/>
<dbReference type="EMBL" id="CP000851">
    <property type="protein sequence ID" value="ABV87249.1"/>
    <property type="molecule type" value="Genomic_DNA"/>
</dbReference>
<dbReference type="RefSeq" id="WP_012155167.1">
    <property type="nucleotide sequence ID" value="NC_009901.1"/>
</dbReference>
<dbReference type="SMR" id="A8H3W2"/>
<dbReference type="STRING" id="398579.Spea_1927"/>
<dbReference type="KEGG" id="spl:Spea_1927"/>
<dbReference type="eggNOG" id="COG0144">
    <property type="taxonomic scope" value="Bacteria"/>
</dbReference>
<dbReference type="eggNOG" id="COG3270">
    <property type="taxonomic scope" value="Bacteria"/>
</dbReference>
<dbReference type="HOGENOM" id="CLU_005316_6_2_6"/>
<dbReference type="OrthoDB" id="9810297at2"/>
<dbReference type="Proteomes" id="UP000002608">
    <property type="component" value="Chromosome"/>
</dbReference>
<dbReference type="GO" id="GO:0005737">
    <property type="term" value="C:cytoplasm"/>
    <property type="evidence" value="ECO:0007669"/>
    <property type="project" value="UniProtKB-SubCell"/>
</dbReference>
<dbReference type="GO" id="GO:0003723">
    <property type="term" value="F:RNA binding"/>
    <property type="evidence" value="ECO:0007669"/>
    <property type="project" value="UniProtKB-KW"/>
</dbReference>
<dbReference type="GO" id="GO:0009383">
    <property type="term" value="F:rRNA (cytosine-C5-)-methyltransferase activity"/>
    <property type="evidence" value="ECO:0007669"/>
    <property type="project" value="TreeGrafter"/>
</dbReference>
<dbReference type="GO" id="GO:0070475">
    <property type="term" value="P:rRNA base methylation"/>
    <property type="evidence" value="ECO:0007669"/>
    <property type="project" value="TreeGrafter"/>
</dbReference>
<dbReference type="CDD" id="cd02440">
    <property type="entry name" value="AdoMet_MTases"/>
    <property type="match status" value="1"/>
</dbReference>
<dbReference type="Gene3D" id="3.10.450.720">
    <property type="match status" value="1"/>
</dbReference>
<dbReference type="Gene3D" id="3.40.50.150">
    <property type="entry name" value="Vaccinia Virus protein VP39"/>
    <property type="match status" value="1"/>
</dbReference>
<dbReference type="HAMAP" id="MF_01579">
    <property type="entry name" value="16SrRNA_methyltr_F"/>
    <property type="match status" value="1"/>
</dbReference>
<dbReference type="InterPro" id="IPR031341">
    <property type="entry name" value="Methyltr_RsmF_N"/>
</dbReference>
<dbReference type="InterPro" id="IPR049560">
    <property type="entry name" value="MeTrfase_RsmB-F_NOP2_cat"/>
</dbReference>
<dbReference type="InterPro" id="IPR001678">
    <property type="entry name" value="MeTrfase_RsmB-F_NOP2_dom"/>
</dbReference>
<dbReference type="InterPro" id="IPR027391">
    <property type="entry name" value="Nol1_Nop2_Fmu_2"/>
</dbReference>
<dbReference type="InterPro" id="IPR011023">
    <property type="entry name" value="Nop2p"/>
</dbReference>
<dbReference type="InterPro" id="IPR023267">
    <property type="entry name" value="RCMT"/>
</dbReference>
<dbReference type="InterPro" id="IPR023545">
    <property type="entry name" value="rRNA_ssu_MeTfrase_F"/>
</dbReference>
<dbReference type="InterPro" id="IPR029063">
    <property type="entry name" value="SAM-dependent_MTases_sf"/>
</dbReference>
<dbReference type="InterPro" id="IPR048457">
    <property type="entry name" value="YebU_pre-PUA_dom"/>
</dbReference>
<dbReference type="NCBIfam" id="TIGR00446">
    <property type="entry name" value="nop2p"/>
    <property type="match status" value="1"/>
</dbReference>
<dbReference type="NCBIfam" id="NF008898">
    <property type="entry name" value="PRK11933.1"/>
    <property type="match status" value="1"/>
</dbReference>
<dbReference type="PANTHER" id="PTHR22807:SF30">
    <property type="entry name" value="28S RRNA (CYTOSINE(4447)-C(5))-METHYLTRANSFERASE-RELATED"/>
    <property type="match status" value="1"/>
</dbReference>
<dbReference type="PANTHER" id="PTHR22807">
    <property type="entry name" value="NOP2 YEAST -RELATED NOL1/NOP2/FMU SUN DOMAIN-CONTAINING"/>
    <property type="match status" value="1"/>
</dbReference>
<dbReference type="Pfam" id="PF01189">
    <property type="entry name" value="Methyltr_RsmB-F"/>
    <property type="match status" value="1"/>
</dbReference>
<dbReference type="Pfam" id="PF17125">
    <property type="entry name" value="Methyltr_RsmF_N"/>
    <property type="match status" value="1"/>
</dbReference>
<dbReference type="Pfam" id="PF13636">
    <property type="entry name" value="Methyltranf_PUA"/>
    <property type="match status" value="1"/>
</dbReference>
<dbReference type="Pfam" id="PF21150">
    <property type="entry name" value="YebU_pre-PUA_dom"/>
    <property type="match status" value="1"/>
</dbReference>
<dbReference type="PRINTS" id="PR02008">
    <property type="entry name" value="RCMTFAMILY"/>
</dbReference>
<dbReference type="SUPFAM" id="SSF53335">
    <property type="entry name" value="S-adenosyl-L-methionine-dependent methyltransferases"/>
    <property type="match status" value="1"/>
</dbReference>
<dbReference type="PROSITE" id="PS51686">
    <property type="entry name" value="SAM_MT_RSMB_NOP"/>
    <property type="match status" value="1"/>
</dbReference>